<reference key="1">
    <citation type="journal article" date="2002" name="J. Bacteriol.">
        <title>Whole-genome comparison of Mycobacterium tuberculosis clinical and laboratory strains.</title>
        <authorList>
            <person name="Fleischmann R.D."/>
            <person name="Alland D."/>
            <person name="Eisen J.A."/>
            <person name="Carpenter L."/>
            <person name="White O."/>
            <person name="Peterson J.D."/>
            <person name="DeBoy R.T."/>
            <person name="Dodson R.J."/>
            <person name="Gwinn M.L."/>
            <person name="Haft D.H."/>
            <person name="Hickey E.K."/>
            <person name="Kolonay J.F."/>
            <person name="Nelson W.C."/>
            <person name="Umayam L.A."/>
            <person name="Ermolaeva M.D."/>
            <person name="Salzberg S.L."/>
            <person name="Delcher A."/>
            <person name="Utterback T.R."/>
            <person name="Weidman J.F."/>
            <person name="Khouri H.M."/>
            <person name="Gill J."/>
            <person name="Mikula A."/>
            <person name="Bishai W."/>
            <person name="Jacobs W.R. Jr."/>
            <person name="Venter J.C."/>
            <person name="Fraser C.M."/>
        </authorList>
    </citation>
    <scope>NUCLEOTIDE SEQUENCE [LARGE SCALE GENOMIC DNA]</scope>
    <source>
        <strain>CDC 1551 / Oshkosh</strain>
    </source>
</reference>
<proteinExistence type="inferred from homology"/>
<name>ERP_MYCTO</name>
<protein>
    <recommendedName>
        <fullName>Exported repetitive protein</fullName>
    </recommendedName>
    <alternativeName>
        <fullName>Cell surface protein PirG</fullName>
    </alternativeName>
    <alternativeName>
        <fullName>EXP53</fullName>
    </alternativeName>
</protein>
<keyword id="KW-1003">Cell membrane</keyword>
<keyword id="KW-0472">Membrane</keyword>
<keyword id="KW-1185">Reference proteome</keyword>
<keyword id="KW-0677">Repeat</keyword>
<keyword id="KW-0732">Signal</keyword>
<keyword id="KW-0812">Transmembrane</keyword>
<keyword id="KW-1133">Transmembrane helix</keyword>
<comment type="function">
    <text evidence="1">Surface-exposed protein required for multiplication and intracellular growth.</text>
</comment>
<comment type="subcellular location">
    <subcellularLocation>
        <location evidence="4">Cell membrane</location>
        <topology evidence="4">Single-pass type I membrane protein</topology>
    </subcellularLocation>
</comment>
<comment type="similarity">
    <text evidence="4">To M.leprae 28 kDa antigen.</text>
</comment>
<sequence>MPNRRRRKLSTAMSAVAALAVASPCAYFLVYESTETTERPEHHEFKQAAVLTDLPGELMSALSQGLSQFGINIPPVPSLTGSGDASTGLTGPGLTSPGLTSPGLTSPGLTDPALTSPGLTPTLPGSLAAPGTTLAPTPGVGANPALTNPALTSPTGATPGLTSPTGLDPALGGANEIPITTPVGLDPGADGTYPILGDPTLGTIPSSPATTSTGGGGLVNDVMQVANELGASQAIDLLKGVLMPSIMQAVQNGGAAAPAASPPVPPIPAAAAVPPTDPITVPVA</sequence>
<feature type="signal peptide" evidence="2">
    <location>
        <begin position="1"/>
        <end position="22"/>
    </location>
</feature>
<feature type="chain" id="PRO_0000427963" description="Exported repetitive protein">
    <location>
        <begin position="23"/>
        <end position="284"/>
    </location>
</feature>
<feature type="topological domain" description="Extracellular" evidence="2">
    <location>
        <begin position="23"/>
        <end position="252"/>
    </location>
</feature>
<feature type="transmembrane region" description="Helical" evidence="2">
    <location>
        <begin position="253"/>
        <end position="273"/>
    </location>
</feature>
<feature type="topological domain" description="Cytoplasmic" evidence="2">
    <location>
        <begin position="274"/>
        <end position="284"/>
    </location>
</feature>
<feature type="repeat" description="1-1">
    <location>
        <begin position="92"/>
        <end position="96"/>
    </location>
</feature>
<feature type="repeat" description="1-2">
    <location>
        <begin position="97"/>
        <end position="101"/>
    </location>
</feature>
<feature type="repeat" description="1-3">
    <location>
        <begin position="102"/>
        <end position="106"/>
    </location>
</feature>
<feature type="repeat" description="1-4">
    <location>
        <begin position="107"/>
        <end position="111"/>
    </location>
</feature>
<feature type="repeat" description="1-5">
    <location>
        <begin position="112"/>
        <end position="116"/>
    </location>
</feature>
<feature type="repeat" description="1-6">
    <location>
        <begin position="117"/>
        <end position="121"/>
    </location>
</feature>
<feature type="repeat" description="2-1">
    <location>
        <begin position="144"/>
        <end position="148"/>
    </location>
</feature>
<feature type="repeat" description="2-2">
    <location>
        <begin position="149"/>
        <end position="153"/>
    </location>
</feature>
<feature type="repeat" description="2-3">
    <location>
        <begin position="154"/>
        <end position="158"/>
    </location>
</feature>
<feature type="repeat" description="2-4">
    <location>
        <begin position="159"/>
        <end position="163"/>
    </location>
</feature>
<feature type="repeat" description="2-5">
    <location>
        <begin position="164"/>
        <end position="168"/>
    </location>
</feature>
<feature type="repeat" description="2-6">
    <location>
        <begin position="169"/>
        <end position="173"/>
    </location>
</feature>
<feature type="region of interest" description="Disordered" evidence="3">
    <location>
        <begin position="80"/>
        <end position="216"/>
    </location>
</feature>
<feature type="region of interest" description="6 X 5 AA tandem repeats of P-[GA]-L-T-S">
    <location>
        <begin position="92"/>
        <end position="121"/>
    </location>
</feature>
<feature type="region of interest" description="6 X 5 AA approximate tandem repeats of P-[ATG]-[LG]-X-X">
    <location>
        <begin position="144"/>
        <end position="173"/>
    </location>
</feature>
<feature type="compositionally biased region" description="Low complexity" evidence="3">
    <location>
        <begin position="86"/>
        <end position="110"/>
    </location>
</feature>
<feature type="compositionally biased region" description="Polar residues" evidence="3">
    <location>
        <begin position="145"/>
        <end position="165"/>
    </location>
</feature>
<feature type="compositionally biased region" description="Low complexity" evidence="3">
    <location>
        <begin position="202"/>
        <end position="212"/>
    </location>
</feature>
<dbReference type="EMBL" id="AE000516">
    <property type="protein sequence ID" value="AAK48283.1"/>
    <property type="molecule type" value="Genomic_DNA"/>
</dbReference>
<dbReference type="PIR" id="F70888">
    <property type="entry name" value="F70888"/>
</dbReference>
<dbReference type="RefSeq" id="WP_003420801.1">
    <property type="nucleotide sequence ID" value="NZ_KK341227.1"/>
</dbReference>
<dbReference type="KEGG" id="mtc:MT3917"/>
<dbReference type="PATRIC" id="fig|83331.31.peg.4214"/>
<dbReference type="HOGENOM" id="CLU_063439_0_0_11"/>
<dbReference type="Proteomes" id="UP000001020">
    <property type="component" value="Chromosome"/>
</dbReference>
<dbReference type="GO" id="GO:0005886">
    <property type="term" value="C:plasma membrane"/>
    <property type="evidence" value="ECO:0007669"/>
    <property type="project" value="UniProtKB-SubCell"/>
</dbReference>
<dbReference type="InterPro" id="IPR008164">
    <property type="entry name" value="XGLTT_repeat"/>
</dbReference>
<dbReference type="Pfam" id="PF01744">
    <property type="entry name" value="GLTT"/>
    <property type="match status" value="1"/>
</dbReference>
<evidence type="ECO:0000250" key="1"/>
<evidence type="ECO:0000255" key="2"/>
<evidence type="ECO:0000256" key="3">
    <source>
        <dbReference type="SAM" id="MobiDB-lite"/>
    </source>
</evidence>
<evidence type="ECO:0000305" key="4"/>
<accession>P9WIQ6</accession>
<accession>L0TDV1</accession>
<accession>O53586</accession>
<accession>P0A5P4</accession>
<accession>Q50793</accession>
<accession>Q53468</accession>
<organism>
    <name type="scientific">Mycobacterium tuberculosis (strain CDC 1551 / Oshkosh)</name>
    <dbReference type="NCBI Taxonomy" id="83331"/>
    <lineage>
        <taxon>Bacteria</taxon>
        <taxon>Bacillati</taxon>
        <taxon>Actinomycetota</taxon>
        <taxon>Actinomycetes</taxon>
        <taxon>Mycobacteriales</taxon>
        <taxon>Mycobacteriaceae</taxon>
        <taxon>Mycobacterium</taxon>
        <taxon>Mycobacterium tuberculosis complex</taxon>
    </lineage>
</organism>
<gene>
    <name type="primary">erp</name>
    <name type="synonym">pirG</name>
    <name type="ordered locus">MT3917</name>
</gene>